<gene>
    <name type="primary">zbtb18.2</name>
    <name type="synonym">znf238.2</name>
</gene>
<reference key="1">
    <citation type="submission" date="2003-02" db="EMBL/GenBank/DDBJ databases">
        <authorList>
            <consortium name="NIH - Xenopus Gene Collection (XGC) project"/>
        </authorList>
    </citation>
    <scope>NUCLEOTIDE SEQUENCE [LARGE SCALE MRNA]</scope>
    <source>
        <tissue>Embryo</tissue>
    </source>
</reference>
<name>ZB182_XENLA</name>
<evidence type="ECO:0000250" key="1"/>
<evidence type="ECO:0000255" key="2">
    <source>
        <dbReference type="PROSITE-ProRule" id="PRU00037"/>
    </source>
</evidence>
<evidence type="ECO:0000255" key="3">
    <source>
        <dbReference type="PROSITE-ProRule" id="PRU00042"/>
    </source>
</evidence>
<evidence type="ECO:0000256" key="4">
    <source>
        <dbReference type="SAM" id="MobiDB-lite"/>
    </source>
</evidence>
<evidence type="ECO:0000305" key="5"/>
<accession>Q7ZWZ4</accession>
<protein>
    <recommendedName>
        <fullName>Zinc finger and BTB domain-containing protein 18.2</fullName>
    </recommendedName>
    <alternativeName>
        <fullName>Zinc finger protein 238.2</fullName>
    </alternativeName>
</protein>
<dbReference type="EMBL" id="BC046572">
    <property type="protein sequence ID" value="AAH46572.1"/>
    <property type="status" value="ALT_INIT"/>
    <property type="molecule type" value="mRNA"/>
</dbReference>
<dbReference type="RefSeq" id="NP_001079635.1">
    <property type="nucleotide sequence ID" value="NM_001086166.1"/>
</dbReference>
<dbReference type="SMR" id="Q7ZWZ4"/>
<dbReference type="DNASU" id="379322"/>
<dbReference type="GeneID" id="379322"/>
<dbReference type="KEGG" id="xla:379322"/>
<dbReference type="AGR" id="Xenbase:XB-GENE-1219070"/>
<dbReference type="CTD" id="379322"/>
<dbReference type="Xenbase" id="XB-GENE-1219070">
    <property type="gene designation" value="znf238.2.L"/>
</dbReference>
<dbReference type="OrthoDB" id="4748970at2759"/>
<dbReference type="Proteomes" id="UP000186698">
    <property type="component" value="Chromosome 8L"/>
</dbReference>
<dbReference type="Bgee" id="379322">
    <property type="expression patterns" value="Expressed in blastula and 19 other cell types or tissues"/>
</dbReference>
<dbReference type="GO" id="GO:0005634">
    <property type="term" value="C:nucleus"/>
    <property type="evidence" value="ECO:0000318"/>
    <property type="project" value="GO_Central"/>
</dbReference>
<dbReference type="GO" id="GO:0003677">
    <property type="term" value="F:DNA binding"/>
    <property type="evidence" value="ECO:0007669"/>
    <property type="project" value="UniProtKB-KW"/>
</dbReference>
<dbReference type="GO" id="GO:0000981">
    <property type="term" value="F:DNA-binding transcription factor activity, RNA polymerase II-specific"/>
    <property type="evidence" value="ECO:0000318"/>
    <property type="project" value="GO_Central"/>
</dbReference>
<dbReference type="GO" id="GO:0008270">
    <property type="term" value="F:zinc ion binding"/>
    <property type="evidence" value="ECO:0007669"/>
    <property type="project" value="UniProtKB-KW"/>
</dbReference>
<dbReference type="GO" id="GO:0006357">
    <property type="term" value="P:regulation of transcription by RNA polymerase II"/>
    <property type="evidence" value="ECO:0000318"/>
    <property type="project" value="GO_Central"/>
</dbReference>
<dbReference type="CDD" id="cd18325">
    <property type="entry name" value="BTB_POZ_ZBTB18_2-like"/>
    <property type="match status" value="1"/>
</dbReference>
<dbReference type="FunFam" id="3.30.160.60:FF:004119">
    <property type="match status" value="1"/>
</dbReference>
<dbReference type="FunFam" id="3.30.160.60:FF:000646">
    <property type="entry name" value="Myeloid zinc finger 1"/>
    <property type="match status" value="1"/>
</dbReference>
<dbReference type="FunFam" id="3.30.160.60:FF:000114">
    <property type="entry name" value="Zinc finger and BTB domain-containing protein 18"/>
    <property type="match status" value="1"/>
</dbReference>
<dbReference type="FunFam" id="3.30.710.10:FF:000021">
    <property type="entry name" value="Zinc finger and BTB domain-containing protein 18"/>
    <property type="match status" value="1"/>
</dbReference>
<dbReference type="Gene3D" id="3.30.160.60">
    <property type="entry name" value="Classic Zinc Finger"/>
    <property type="match status" value="3"/>
</dbReference>
<dbReference type="Gene3D" id="3.30.710.10">
    <property type="entry name" value="Potassium Channel Kv1.1, Chain A"/>
    <property type="match status" value="1"/>
</dbReference>
<dbReference type="InterPro" id="IPR000210">
    <property type="entry name" value="BTB/POZ_dom"/>
</dbReference>
<dbReference type="InterPro" id="IPR011333">
    <property type="entry name" value="SKP1/BTB/POZ_sf"/>
</dbReference>
<dbReference type="InterPro" id="IPR036236">
    <property type="entry name" value="Znf_C2H2_sf"/>
</dbReference>
<dbReference type="InterPro" id="IPR013087">
    <property type="entry name" value="Znf_C2H2_type"/>
</dbReference>
<dbReference type="PANTHER" id="PTHR24394:SF20">
    <property type="entry name" value="ZINC FINGER AND BTB DOMAIN-CONTAINING PROTEIN 42"/>
    <property type="match status" value="1"/>
</dbReference>
<dbReference type="PANTHER" id="PTHR24394">
    <property type="entry name" value="ZINC FINGER PROTEIN"/>
    <property type="match status" value="1"/>
</dbReference>
<dbReference type="Pfam" id="PF00651">
    <property type="entry name" value="BTB"/>
    <property type="match status" value="1"/>
</dbReference>
<dbReference type="Pfam" id="PF00096">
    <property type="entry name" value="zf-C2H2"/>
    <property type="match status" value="2"/>
</dbReference>
<dbReference type="Pfam" id="PF13894">
    <property type="entry name" value="zf-C2H2_4"/>
    <property type="match status" value="1"/>
</dbReference>
<dbReference type="SMART" id="SM00225">
    <property type="entry name" value="BTB"/>
    <property type="match status" value="1"/>
</dbReference>
<dbReference type="SMART" id="SM00355">
    <property type="entry name" value="ZnF_C2H2"/>
    <property type="match status" value="4"/>
</dbReference>
<dbReference type="SUPFAM" id="SSF57667">
    <property type="entry name" value="beta-beta-alpha zinc fingers"/>
    <property type="match status" value="2"/>
</dbReference>
<dbReference type="SUPFAM" id="SSF54695">
    <property type="entry name" value="POZ domain"/>
    <property type="match status" value="1"/>
</dbReference>
<dbReference type="PROSITE" id="PS50097">
    <property type="entry name" value="BTB"/>
    <property type="match status" value="1"/>
</dbReference>
<dbReference type="PROSITE" id="PS00028">
    <property type="entry name" value="ZINC_FINGER_C2H2_1"/>
    <property type="match status" value="4"/>
</dbReference>
<dbReference type="PROSITE" id="PS50157">
    <property type="entry name" value="ZINC_FINGER_C2H2_2"/>
    <property type="match status" value="4"/>
</dbReference>
<keyword id="KW-0238">DNA-binding</keyword>
<keyword id="KW-0479">Metal-binding</keyword>
<keyword id="KW-0539">Nucleus</keyword>
<keyword id="KW-1185">Reference proteome</keyword>
<keyword id="KW-0677">Repeat</keyword>
<keyword id="KW-0678">Repressor</keyword>
<keyword id="KW-0804">Transcription</keyword>
<keyword id="KW-0805">Transcription regulation</keyword>
<keyword id="KW-0862">Zinc</keyword>
<keyword id="KW-0863">Zinc-finger</keyword>
<sequence length="472" mass="52691">MEFPDHSRQLLQCLSQQRHQGFLCDCTVLVGEAQFRAHRAVLASCSMYFHLFYRDQLDKRDIVHLNSDIVTAPAFSLLLQFMYEGKLEFSNLPVEDVLAAASYLHMYDIVKVCKGKLKDKELNSGEKIIDDGEKDDKPVDSEEHHEHSFDASQQKISTLDSVKPIWKEKVSGLSGLSSDLIGVNSVPAEAVMCKRAAGKTKANDSSPSSPLSQRSANHTHPPSDRDGALDLSFKPMPGRDSFHPSYVFGQLVSDSQQQGSLPLVKHEQDLLSEQEDSQAKSPKSQQVGNPAKSLVTGLGHMFTGNGNSHTREDDLYQDRDESEDEMDSSDLSTSGVLVSPGQICICPLCSKVFPSPHILQLHLSSHFKDKDNSRIKMSPDGSVPTCTICGKTFSCMYTLKRHERTHSGEKPFTCGQCGKSFQYSHNLSRHAVVHTREKPHACKWCERRFTQSGDLYRHIRKFHCGLVKSLVV</sequence>
<comment type="function">
    <text evidence="1">Transcriptional repressor that plays a role in various developmental processes. Specifically binds the consensus DNA sequence 5'-[AC]ACATCTG[GT][AC]-3' which contains the E box core, and acts by recruiting chromatin remodeling multiprotein complexes (By similarity).</text>
</comment>
<comment type="subcellular location">
    <subcellularLocation>
        <location evidence="1">Nucleus</location>
    </subcellularLocation>
</comment>
<comment type="similarity">
    <text evidence="5">Belongs to the krueppel C2H2-type zinc-finger protein family. ZBTB18 subfamily.</text>
</comment>
<comment type="sequence caution" evidence="5">
    <conflict type="erroneous initiation">
        <sequence resource="EMBL-CDS" id="AAH46572"/>
    </conflict>
    <text>Extended N-terminus.</text>
</comment>
<organism>
    <name type="scientific">Xenopus laevis</name>
    <name type="common">African clawed frog</name>
    <dbReference type="NCBI Taxonomy" id="8355"/>
    <lineage>
        <taxon>Eukaryota</taxon>
        <taxon>Metazoa</taxon>
        <taxon>Chordata</taxon>
        <taxon>Craniata</taxon>
        <taxon>Vertebrata</taxon>
        <taxon>Euteleostomi</taxon>
        <taxon>Amphibia</taxon>
        <taxon>Batrachia</taxon>
        <taxon>Anura</taxon>
        <taxon>Pipoidea</taxon>
        <taxon>Pipidae</taxon>
        <taxon>Xenopodinae</taxon>
        <taxon>Xenopus</taxon>
        <taxon>Xenopus</taxon>
    </lineage>
</organism>
<proteinExistence type="evidence at transcript level"/>
<feature type="chain" id="PRO_0000391927" description="Zinc finger and BTB domain-containing protein 18.2">
    <location>
        <begin position="1"/>
        <end position="472"/>
    </location>
</feature>
<feature type="domain" description="BTB" evidence="2">
    <location>
        <begin position="24"/>
        <end position="91"/>
    </location>
</feature>
<feature type="zinc finger region" description="C2H2-type 1" evidence="3">
    <location>
        <begin position="344"/>
        <end position="366"/>
    </location>
</feature>
<feature type="zinc finger region" description="C2H2-type 2" evidence="3">
    <location>
        <begin position="384"/>
        <end position="406"/>
    </location>
</feature>
<feature type="zinc finger region" description="C2H2-type 3" evidence="3">
    <location>
        <begin position="412"/>
        <end position="434"/>
    </location>
</feature>
<feature type="zinc finger region" description="C2H2-type 4" evidence="3">
    <location>
        <begin position="440"/>
        <end position="463"/>
    </location>
</feature>
<feature type="region of interest" description="Disordered" evidence="4">
    <location>
        <begin position="127"/>
        <end position="155"/>
    </location>
</feature>
<feature type="region of interest" description="Disordered" evidence="4">
    <location>
        <begin position="197"/>
        <end position="236"/>
    </location>
</feature>
<feature type="region of interest" description="Disordered" evidence="4">
    <location>
        <begin position="269"/>
        <end position="334"/>
    </location>
</feature>
<feature type="compositionally biased region" description="Basic and acidic residues" evidence="4">
    <location>
        <begin position="127"/>
        <end position="149"/>
    </location>
</feature>
<feature type="compositionally biased region" description="Low complexity" evidence="4">
    <location>
        <begin position="205"/>
        <end position="215"/>
    </location>
</feature>
<feature type="compositionally biased region" description="Polar residues" evidence="4">
    <location>
        <begin position="279"/>
        <end position="288"/>
    </location>
</feature>
<feature type="compositionally biased region" description="Basic and acidic residues" evidence="4">
    <location>
        <begin position="309"/>
        <end position="319"/>
    </location>
</feature>